<organism>
    <name type="scientific">Polynucleobacter asymbioticus (strain DSM 18221 / CIP 109841 / QLW-P1DMWA-1)</name>
    <name type="common">Polynucleobacter necessarius subsp. asymbioticus</name>
    <dbReference type="NCBI Taxonomy" id="312153"/>
    <lineage>
        <taxon>Bacteria</taxon>
        <taxon>Pseudomonadati</taxon>
        <taxon>Pseudomonadota</taxon>
        <taxon>Betaproteobacteria</taxon>
        <taxon>Burkholderiales</taxon>
        <taxon>Burkholderiaceae</taxon>
        <taxon>Polynucleobacter</taxon>
    </lineage>
</organism>
<evidence type="ECO:0000255" key="1">
    <source>
        <dbReference type="HAMAP-Rule" id="MF_00012"/>
    </source>
</evidence>
<name>ILVD_POLAQ</name>
<gene>
    <name evidence="1" type="primary">ilvD</name>
    <name type="ordered locus">Pnuc_0680</name>
</gene>
<accession>A4SWN4</accession>
<comment type="function">
    <text evidence="1">Functions in the biosynthesis of branched-chain amino acids. Catalyzes the dehydration of (2R,3R)-2,3-dihydroxy-3-methylpentanoate (2,3-dihydroxy-3-methylvalerate) into 2-oxo-3-methylpentanoate (2-oxo-3-methylvalerate) and of (2R)-2,3-dihydroxy-3-methylbutanoate (2,3-dihydroxyisovalerate) into 2-oxo-3-methylbutanoate (2-oxoisovalerate), the penultimate precursor to L-isoleucine and L-valine, respectively.</text>
</comment>
<comment type="catalytic activity">
    <reaction evidence="1">
        <text>(2R)-2,3-dihydroxy-3-methylbutanoate = 3-methyl-2-oxobutanoate + H2O</text>
        <dbReference type="Rhea" id="RHEA:24809"/>
        <dbReference type="ChEBI" id="CHEBI:11851"/>
        <dbReference type="ChEBI" id="CHEBI:15377"/>
        <dbReference type="ChEBI" id="CHEBI:49072"/>
        <dbReference type="EC" id="4.2.1.9"/>
    </reaction>
    <physiologicalReaction direction="left-to-right" evidence="1">
        <dbReference type="Rhea" id="RHEA:24810"/>
    </physiologicalReaction>
</comment>
<comment type="catalytic activity">
    <reaction evidence="1">
        <text>(2R,3R)-2,3-dihydroxy-3-methylpentanoate = (S)-3-methyl-2-oxopentanoate + H2O</text>
        <dbReference type="Rhea" id="RHEA:27694"/>
        <dbReference type="ChEBI" id="CHEBI:15377"/>
        <dbReference type="ChEBI" id="CHEBI:35146"/>
        <dbReference type="ChEBI" id="CHEBI:49258"/>
        <dbReference type="EC" id="4.2.1.9"/>
    </reaction>
    <physiologicalReaction direction="left-to-right" evidence="1">
        <dbReference type="Rhea" id="RHEA:27695"/>
    </physiologicalReaction>
</comment>
<comment type="cofactor">
    <cofactor evidence="1">
        <name>[2Fe-2S] cluster</name>
        <dbReference type="ChEBI" id="CHEBI:190135"/>
    </cofactor>
    <text evidence="1">Binds 1 [2Fe-2S] cluster per subunit. This cluster acts as a Lewis acid cofactor.</text>
</comment>
<comment type="cofactor">
    <cofactor evidence="1">
        <name>Mg(2+)</name>
        <dbReference type="ChEBI" id="CHEBI:18420"/>
    </cofactor>
</comment>
<comment type="pathway">
    <text evidence="1">Amino-acid biosynthesis; L-isoleucine biosynthesis; L-isoleucine from 2-oxobutanoate: step 3/4.</text>
</comment>
<comment type="pathway">
    <text evidence="1">Amino-acid biosynthesis; L-valine biosynthesis; L-valine from pyruvate: step 3/4.</text>
</comment>
<comment type="subunit">
    <text evidence="1">Homodimer.</text>
</comment>
<comment type="similarity">
    <text evidence="1">Belongs to the IlvD/Edd family.</text>
</comment>
<keyword id="KW-0001">2Fe-2S</keyword>
<keyword id="KW-0028">Amino-acid biosynthesis</keyword>
<keyword id="KW-0100">Branched-chain amino acid biosynthesis</keyword>
<keyword id="KW-0408">Iron</keyword>
<keyword id="KW-0411">Iron-sulfur</keyword>
<keyword id="KW-0456">Lyase</keyword>
<keyword id="KW-0460">Magnesium</keyword>
<keyword id="KW-0479">Metal-binding</keyword>
<keyword id="KW-1185">Reference proteome</keyword>
<reference key="1">
    <citation type="journal article" date="2012" name="Stand. Genomic Sci.">
        <title>Complete genome sequence of Polynucleobacter necessarius subsp. asymbioticus type strain (QLW-P1DMWA-1(T)).</title>
        <authorList>
            <person name="Meincke L."/>
            <person name="Copeland A."/>
            <person name="Lapidus A."/>
            <person name="Lucas S."/>
            <person name="Berry K.W."/>
            <person name="Del Rio T.G."/>
            <person name="Hammon N."/>
            <person name="Dalin E."/>
            <person name="Tice H."/>
            <person name="Pitluck S."/>
            <person name="Richardson P."/>
            <person name="Bruce D."/>
            <person name="Goodwin L."/>
            <person name="Han C."/>
            <person name="Tapia R."/>
            <person name="Detter J.C."/>
            <person name="Schmutz J."/>
            <person name="Brettin T."/>
            <person name="Larimer F."/>
            <person name="Land M."/>
            <person name="Hauser L."/>
            <person name="Kyrpides N.C."/>
            <person name="Ivanova N."/>
            <person name="Goker M."/>
            <person name="Woyke T."/>
            <person name="Wu Q.L."/>
            <person name="Pockl M."/>
            <person name="Hahn M.W."/>
            <person name="Klenk H.P."/>
        </authorList>
    </citation>
    <scope>NUCLEOTIDE SEQUENCE [LARGE SCALE GENOMIC DNA]</scope>
    <source>
        <strain>DSM 18221 / CIP 109841 / QLW-P1DMWA-1</strain>
    </source>
</reference>
<sequence length="564" mass="59500">MKRLNERSRMVTEGVARAPNRSMYYAMGYEEKDFVKPMVGVANGHSTITPCNSGLQKLADAAVEALEAAGAKAQVFGTPTVSDGIGMGTEGMKYSLVSREVIADSIEVCVNGLWQDGVVVIGGCDKNMPGGMMALARTNVPGIYVYGGTIKPGHFKGKELNIVSAFEAVGEFTSGRLSEEDLKGVEQHACPGSGSCGGMYTANTMSSSFEALGMSLPYSSTMANVDAEKVASAAESARVLVEAVKNNLRPRDIITKKSVENAVSVIMAVGGSTNAVLHFLAITSAAEIDWTIDDFERIRKQVPVIVDMKPSGTYLATDLHQAGGIPQVMKILLDGGLLHGDCITITGKTIAEVLKDVPSVPRADQKVIRTLDNPLYKQGHLAILKGNISPEGCVAKITGLKNPSITGPARVFDSEDDAMAAIMAQKIKDGDIVVIRYEGPKGGPGMREMLAPTSALVGQGLGESVGLITDGRFSGGTWGMVVGHVAPEAFVGGTIALINEGDSVTIDAHQLLIQLNVSEEEIAKRRAAWKQPKPRYTRGLLAKYASLASSASKGAVTDLNLDLT</sequence>
<protein>
    <recommendedName>
        <fullName evidence="1">Dihydroxy-acid dehydratase</fullName>
        <shortName evidence="1">DAD</shortName>
        <ecNumber evidence="1">4.2.1.9</ecNumber>
    </recommendedName>
</protein>
<proteinExistence type="inferred from homology"/>
<dbReference type="EC" id="4.2.1.9" evidence="1"/>
<dbReference type="EMBL" id="CP000655">
    <property type="protein sequence ID" value="ABP33898.1"/>
    <property type="molecule type" value="Genomic_DNA"/>
</dbReference>
<dbReference type="RefSeq" id="WP_011902523.1">
    <property type="nucleotide sequence ID" value="NC_009379.1"/>
</dbReference>
<dbReference type="SMR" id="A4SWN4"/>
<dbReference type="GeneID" id="31481039"/>
<dbReference type="KEGG" id="pnu:Pnuc_0680"/>
<dbReference type="eggNOG" id="COG0129">
    <property type="taxonomic scope" value="Bacteria"/>
</dbReference>
<dbReference type="HOGENOM" id="CLU_014271_4_2_4"/>
<dbReference type="UniPathway" id="UPA00047">
    <property type="reaction ID" value="UER00057"/>
</dbReference>
<dbReference type="UniPathway" id="UPA00049">
    <property type="reaction ID" value="UER00061"/>
</dbReference>
<dbReference type="Proteomes" id="UP000000231">
    <property type="component" value="Chromosome"/>
</dbReference>
<dbReference type="GO" id="GO:0051537">
    <property type="term" value="F:2 iron, 2 sulfur cluster binding"/>
    <property type="evidence" value="ECO:0007669"/>
    <property type="project" value="UniProtKB-UniRule"/>
</dbReference>
<dbReference type="GO" id="GO:0004160">
    <property type="term" value="F:dihydroxy-acid dehydratase activity"/>
    <property type="evidence" value="ECO:0007669"/>
    <property type="project" value="UniProtKB-UniRule"/>
</dbReference>
<dbReference type="GO" id="GO:0000287">
    <property type="term" value="F:magnesium ion binding"/>
    <property type="evidence" value="ECO:0007669"/>
    <property type="project" value="UniProtKB-UniRule"/>
</dbReference>
<dbReference type="GO" id="GO:0009097">
    <property type="term" value="P:isoleucine biosynthetic process"/>
    <property type="evidence" value="ECO:0007669"/>
    <property type="project" value="UniProtKB-UniRule"/>
</dbReference>
<dbReference type="GO" id="GO:0009099">
    <property type="term" value="P:L-valine biosynthetic process"/>
    <property type="evidence" value="ECO:0007669"/>
    <property type="project" value="UniProtKB-UniRule"/>
</dbReference>
<dbReference type="FunFam" id="3.50.30.80:FF:000001">
    <property type="entry name" value="Dihydroxy-acid dehydratase"/>
    <property type="match status" value="1"/>
</dbReference>
<dbReference type="Gene3D" id="3.50.30.80">
    <property type="entry name" value="IlvD/EDD C-terminal domain-like"/>
    <property type="match status" value="1"/>
</dbReference>
<dbReference type="HAMAP" id="MF_00012">
    <property type="entry name" value="IlvD"/>
    <property type="match status" value="1"/>
</dbReference>
<dbReference type="InterPro" id="IPR050165">
    <property type="entry name" value="DHAD_IlvD/Edd"/>
</dbReference>
<dbReference type="InterPro" id="IPR042096">
    <property type="entry name" value="Dihydro-acid_dehy_C"/>
</dbReference>
<dbReference type="InterPro" id="IPR004404">
    <property type="entry name" value="DihydroxyA_deHydtase"/>
</dbReference>
<dbReference type="InterPro" id="IPR020558">
    <property type="entry name" value="DiOHA_6PGluconate_deHydtase_CS"/>
</dbReference>
<dbReference type="InterPro" id="IPR056740">
    <property type="entry name" value="ILV_EDD_C"/>
</dbReference>
<dbReference type="InterPro" id="IPR000581">
    <property type="entry name" value="ILV_EDD_N"/>
</dbReference>
<dbReference type="InterPro" id="IPR037237">
    <property type="entry name" value="IlvD/EDD_N"/>
</dbReference>
<dbReference type="NCBIfam" id="TIGR00110">
    <property type="entry name" value="ilvD"/>
    <property type="match status" value="1"/>
</dbReference>
<dbReference type="NCBIfam" id="NF002068">
    <property type="entry name" value="PRK00911.1"/>
    <property type="match status" value="1"/>
</dbReference>
<dbReference type="PANTHER" id="PTHR21000">
    <property type="entry name" value="DIHYDROXY-ACID DEHYDRATASE DAD"/>
    <property type="match status" value="1"/>
</dbReference>
<dbReference type="PANTHER" id="PTHR21000:SF5">
    <property type="entry name" value="DIHYDROXY-ACID DEHYDRATASE, MITOCHONDRIAL"/>
    <property type="match status" value="1"/>
</dbReference>
<dbReference type="Pfam" id="PF24877">
    <property type="entry name" value="ILV_EDD_C"/>
    <property type="match status" value="1"/>
</dbReference>
<dbReference type="Pfam" id="PF00920">
    <property type="entry name" value="ILVD_EDD_N"/>
    <property type="match status" value="1"/>
</dbReference>
<dbReference type="SUPFAM" id="SSF143975">
    <property type="entry name" value="IlvD/EDD N-terminal domain-like"/>
    <property type="match status" value="1"/>
</dbReference>
<dbReference type="SUPFAM" id="SSF52016">
    <property type="entry name" value="LeuD/IlvD-like"/>
    <property type="match status" value="1"/>
</dbReference>
<dbReference type="PROSITE" id="PS00886">
    <property type="entry name" value="ILVD_EDD_1"/>
    <property type="match status" value="1"/>
</dbReference>
<dbReference type="PROSITE" id="PS00887">
    <property type="entry name" value="ILVD_EDD_2"/>
    <property type="match status" value="1"/>
</dbReference>
<feature type="chain" id="PRO_1000089399" description="Dihydroxy-acid dehydratase">
    <location>
        <begin position="1"/>
        <end position="564"/>
    </location>
</feature>
<feature type="active site" description="Proton acceptor" evidence="1">
    <location>
        <position position="474"/>
    </location>
</feature>
<feature type="binding site" evidence="1">
    <location>
        <position position="51"/>
    </location>
    <ligand>
        <name>[2Fe-2S] cluster</name>
        <dbReference type="ChEBI" id="CHEBI:190135"/>
    </ligand>
</feature>
<feature type="binding site" evidence="1">
    <location>
        <position position="83"/>
    </location>
    <ligand>
        <name>Mg(2+)</name>
        <dbReference type="ChEBI" id="CHEBI:18420"/>
    </ligand>
</feature>
<feature type="binding site" evidence="1">
    <location>
        <position position="124"/>
    </location>
    <ligand>
        <name>[2Fe-2S] cluster</name>
        <dbReference type="ChEBI" id="CHEBI:190135"/>
    </ligand>
</feature>
<feature type="binding site" evidence="1">
    <location>
        <position position="125"/>
    </location>
    <ligand>
        <name>Mg(2+)</name>
        <dbReference type="ChEBI" id="CHEBI:18420"/>
    </ligand>
</feature>
<feature type="binding site" description="via carbamate group" evidence="1">
    <location>
        <position position="126"/>
    </location>
    <ligand>
        <name>Mg(2+)</name>
        <dbReference type="ChEBI" id="CHEBI:18420"/>
    </ligand>
</feature>
<feature type="binding site" evidence="1">
    <location>
        <position position="196"/>
    </location>
    <ligand>
        <name>[2Fe-2S] cluster</name>
        <dbReference type="ChEBI" id="CHEBI:190135"/>
    </ligand>
</feature>
<feature type="binding site" evidence="1">
    <location>
        <position position="448"/>
    </location>
    <ligand>
        <name>Mg(2+)</name>
        <dbReference type="ChEBI" id="CHEBI:18420"/>
    </ligand>
</feature>
<feature type="modified residue" description="N6-carboxylysine" evidence="1">
    <location>
        <position position="126"/>
    </location>
</feature>